<accession>A1BDT2</accession>
<dbReference type="EMBL" id="CP000492">
    <property type="protein sequence ID" value="ABL64559.1"/>
    <property type="molecule type" value="Genomic_DNA"/>
</dbReference>
<dbReference type="RefSeq" id="WP_011744392.1">
    <property type="nucleotide sequence ID" value="NC_008639.1"/>
</dbReference>
<dbReference type="SMR" id="A1BDT2"/>
<dbReference type="STRING" id="290317.Cpha266_0502"/>
<dbReference type="KEGG" id="cph:Cpha266_0502"/>
<dbReference type="eggNOG" id="COG0781">
    <property type="taxonomic scope" value="Bacteria"/>
</dbReference>
<dbReference type="HOGENOM" id="CLU_087843_3_0_10"/>
<dbReference type="OrthoDB" id="9787568at2"/>
<dbReference type="Proteomes" id="UP000008701">
    <property type="component" value="Chromosome"/>
</dbReference>
<dbReference type="GO" id="GO:0005829">
    <property type="term" value="C:cytosol"/>
    <property type="evidence" value="ECO:0007669"/>
    <property type="project" value="TreeGrafter"/>
</dbReference>
<dbReference type="GO" id="GO:0003723">
    <property type="term" value="F:RNA binding"/>
    <property type="evidence" value="ECO:0007669"/>
    <property type="project" value="UniProtKB-UniRule"/>
</dbReference>
<dbReference type="GO" id="GO:0006353">
    <property type="term" value="P:DNA-templated transcription termination"/>
    <property type="evidence" value="ECO:0007669"/>
    <property type="project" value="UniProtKB-UniRule"/>
</dbReference>
<dbReference type="GO" id="GO:0031564">
    <property type="term" value="P:transcription antitermination"/>
    <property type="evidence" value="ECO:0007669"/>
    <property type="project" value="UniProtKB-KW"/>
</dbReference>
<dbReference type="CDD" id="cd00619">
    <property type="entry name" value="Terminator_NusB"/>
    <property type="match status" value="1"/>
</dbReference>
<dbReference type="Gene3D" id="1.10.940.10">
    <property type="entry name" value="NusB-like"/>
    <property type="match status" value="1"/>
</dbReference>
<dbReference type="HAMAP" id="MF_00073">
    <property type="entry name" value="NusB"/>
    <property type="match status" value="1"/>
</dbReference>
<dbReference type="InterPro" id="IPR035926">
    <property type="entry name" value="NusB-like_sf"/>
</dbReference>
<dbReference type="InterPro" id="IPR011605">
    <property type="entry name" value="NusB_fam"/>
</dbReference>
<dbReference type="InterPro" id="IPR006027">
    <property type="entry name" value="NusB_RsmB_TIM44"/>
</dbReference>
<dbReference type="NCBIfam" id="TIGR01951">
    <property type="entry name" value="nusB"/>
    <property type="match status" value="1"/>
</dbReference>
<dbReference type="PANTHER" id="PTHR11078:SF3">
    <property type="entry name" value="ANTITERMINATION NUSB DOMAIN-CONTAINING PROTEIN"/>
    <property type="match status" value="1"/>
</dbReference>
<dbReference type="PANTHER" id="PTHR11078">
    <property type="entry name" value="N UTILIZATION SUBSTANCE PROTEIN B-RELATED"/>
    <property type="match status" value="1"/>
</dbReference>
<dbReference type="Pfam" id="PF01029">
    <property type="entry name" value="NusB"/>
    <property type="match status" value="1"/>
</dbReference>
<dbReference type="SUPFAM" id="SSF48013">
    <property type="entry name" value="NusB-like"/>
    <property type="match status" value="1"/>
</dbReference>
<protein>
    <recommendedName>
        <fullName evidence="1">Transcription antitermination protein NusB</fullName>
    </recommendedName>
    <alternativeName>
        <fullName evidence="1">Antitermination factor NusB</fullName>
    </alternativeName>
</protein>
<reference key="1">
    <citation type="submission" date="2006-12" db="EMBL/GenBank/DDBJ databases">
        <title>Complete sequence of Chlorobium phaeobacteroides DSM 266.</title>
        <authorList>
            <consortium name="US DOE Joint Genome Institute"/>
            <person name="Copeland A."/>
            <person name="Lucas S."/>
            <person name="Lapidus A."/>
            <person name="Barry K."/>
            <person name="Detter J.C."/>
            <person name="Glavina del Rio T."/>
            <person name="Hammon N."/>
            <person name="Israni S."/>
            <person name="Pitluck S."/>
            <person name="Goltsman E."/>
            <person name="Schmutz J."/>
            <person name="Larimer F."/>
            <person name="Land M."/>
            <person name="Hauser L."/>
            <person name="Mikhailova N."/>
            <person name="Li T."/>
            <person name="Overmann J."/>
            <person name="Bryant D.A."/>
            <person name="Richardson P."/>
        </authorList>
    </citation>
    <scope>NUCLEOTIDE SEQUENCE [LARGE SCALE GENOMIC DNA]</scope>
    <source>
        <strain>DSM 266 / SMG 266 / 2430</strain>
    </source>
</reference>
<sequence>MKTYRRQIREKILQALYTLELRDTDIESAANWLLTKEIQEDPNAMKFFNLLLKNIKEHREEIDQYIARHTFNWDMSRIAIIDKNILRMALAELLYCEDIPPKVSINEAIEIAKKFSSTDKSSKFVNGILDAIFNELKAEGKIHKNGRGLIDHSAIKLQKESETPE</sequence>
<feature type="chain" id="PRO_1000023725" description="Transcription antitermination protein NusB">
    <location>
        <begin position="1"/>
        <end position="165"/>
    </location>
</feature>
<name>NUSB_CHLPD</name>
<gene>
    <name evidence="1" type="primary">nusB</name>
    <name type="ordered locus">Cpha266_0502</name>
</gene>
<organism>
    <name type="scientific">Chlorobium phaeobacteroides (strain DSM 266 / SMG 266 / 2430)</name>
    <dbReference type="NCBI Taxonomy" id="290317"/>
    <lineage>
        <taxon>Bacteria</taxon>
        <taxon>Pseudomonadati</taxon>
        <taxon>Chlorobiota</taxon>
        <taxon>Chlorobiia</taxon>
        <taxon>Chlorobiales</taxon>
        <taxon>Chlorobiaceae</taxon>
        <taxon>Chlorobium/Pelodictyon group</taxon>
        <taxon>Chlorobium</taxon>
    </lineage>
</organism>
<keyword id="KW-1185">Reference proteome</keyword>
<keyword id="KW-0694">RNA-binding</keyword>
<keyword id="KW-0804">Transcription</keyword>
<keyword id="KW-0889">Transcription antitermination</keyword>
<keyword id="KW-0805">Transcription regulation</keyword>
<comment type="function">
    <text evidence="1">Involved in transcription antitermination. Required for transcription of ribosomal RNA (rRNA) genes. Binds specifically to the boxA antiterminator sequence of the ribosomal RNA (rrn) operons.</text>
</comment>
<comment type="similarity">
    <text evidence="1">Belongs to the NusB family.</text>
</comment>
<evidence type="ECO:0000255" key="1">
    <source>
        <dbReference type="HAMAP-Rule" id="MF_00073"/>
    </source>
</evidence>
<proteinExistence type="inferred from homology"/>